<organism>
    <name type="scientific">Sulfurihydrogenibium sp. (strain YO3AOP1)</name>
    <dbReference type="NCBI Taxonomy" id="436114"/>
    <lineage>
        <taxon>Bacteria</taxon>
        <taxon>Pseudomonadati</taxon>
        <taxon>Aquificota</taxon>
        <taxon>Aquificia</taxon>
        <taxon>Aquificales</taxon>
        <taxon>Hydrogenothermaceae</taxon>
        <taxon>Sulfurihydrogenibium</taxon>
    </lineage>
</organism>
<evidence type="ECO:0000255" key="1">
    <source>
        <dbReference type="HAMAP-Rule" id="MF_00161"/>
    </source>
</evidence>
<keyword id="KW-0064">Aspartyl protease</keyword>
<keyword id="KW-0997">Cell inner membrane</keyword>
<keyword id="KW-1003">Cell membrane</keyword>
<keyword id="KW-0378">Hydrolase</keyword>
<keyword id="KW-0472">Membrane</keyword>
<keyword id="KW-0645">Protease</keyword>
<keyword id="KW-0812">Transmembrane</keyword>
<keyword id="KW-1133">Transmembrane helix</keyword>
<gene>
    <name evidence="1" type="primary">lspA</name>
    <name type="ordered locus">SYO3AOP1_0195</name>
</gene>
<accession>B2V758</accession>
<proteinExistence type="inferred from homology"/>
<reference key="1">
    <citation type="journal article" date="2009" name="J. Bacteriol.">
        <title>Complete and draft genome sequences of six members of the Aquificales.</title>
        <authorList>
            <person name="Reysenbach A.-L."/>
            <person name="Hamamura N."/>
            <person name="Podar M."/>
            <person name="Griffiths E."/>
            <person name="Ferreira S."/>
            <person name="Hochstein R."/>
            <person name="Heidelberg J."/>
            <person name="Johnson J."/>
            <person name="Mead D."/>
            <person name="Pohorille A."/>
            <person name="Sarmiento M."/>
            <person name="Schweighofer K."/>
            <person name="Seshadri R."/>
            <person name="Voytek M.A."/>
        </authorList>
    </citation>
    <scope>NUCLEOTIDE SEQUENCE [LARGE SCALE GENOMIC DNA]</scope>
    <source>
        <strain>YO3AOP1</strain>
    </source>
</reference>
<dbReference type="EC" id="3.4.23.36" evidence="1"/>
<dbReference type="EMBL" id="CP001080">
    <property type="protein sequence ID" value="ACD65840.1"/>
    <property type="molecule type" value="Genomic_DNA"/>
</dbReference>
<dbReference type="RefSeq" id="WP_012458930.1">
    <property type="nucleotide sequence ID" value="NC_010730.1"/>
</dbReference>
<dbReference type="SMR" id="B2V758"/>
<dbReference type="STRING" id="436114.SYO3AOP1_0195"/>
<dbReference type="KEGG" id="sul:SYO3AOP1_0195"/>
<dbReference type="eggNOG" id="COG0597">
    <property type="taxonomic scope" value="Bacteria"/>
</dbReference>
<dbReference type="HOGENOM" id="CLU_083252_4_3_0"/>
<dbReference type="UniPathway" id="UPA00665"/>
<dbReference type="GO" id="GO:0005886">
    <property type="term" value="C:plasma membrane"/>
    <property type="evidence" value="ECO:0007669"/>
    <property type="project" value="UniProtKB-SubCell"/>
</dbReference>
<dbReference type="GO" id="GO:0004190">
    <property type="term" value="F:aspartic-type endopeptidase activity"/>
    <property type="evidence" value="ECO:0007669"/>
    <property type="project" value="UniProtKB-UniRule"/>
</dbReference>
<dbReference type="GO" id="GO:0006508">
    <property type="term" value="P:proteolysis"/>
    <property type="evidence" value="ECO:0007669"/>
    <property type="project" value="UniProtKB-KW"/>
</dbReference>
<dbReference type="HAMAP" id="MF_00161">
    <property type="entry name" value="LspA"/>
    <property type="match status" value="1"/>
</dbReference>
<dbReference type="InterPro" id="IPR001872">
    <property type="entry name" value="Peptidase_A8"/>
</dbReference>
<dbReference type="NCBIfam" id="TIGR00077">
    <property type="entry name" value="lspA"/>
    <property type="match status" value="1"/>
</dbReference>
<dbReference type="NCBIfam" id="NF011360">
    <property type="entry name" value="PRK14779.1"/>
    <property type="match status" value="1"/>
</dbReference>
<dbReference type="PANTHER" id="PTHR33695">
    <property type="entry name" value="LIPOPROTEIN SIGNAL PEPTIDASE"/>
    <property type="match status" value="1"/>
</dbReference>
<dbReference type="PANTHER" id="PTHR33695:SF1">
    <property type="entry name" value="LIPOPROTEIN SIGNAL PEPTIDASE"/>
    <property type="match status" value="1"/>
</dbReference>
<dbReference type="Pfam" id="PF01252">
    <property type="entry name" value="Peptidase_A8"/>
    <property type="match status" value="1"/>
</dbReference>
<dbReference type="PRINTS" id="PR00781">
    <property type="entry name" value="LIPOSIGPTASE"/>
</dbReference>
<dbReference type="PROSITE" id="PS00855">
    <property type="entry name" value="SPASE_II"/>
    <property type="match status" value="1"/>
</dbReference>
<protein>
    <recommendedName>
        <fullName evidence="1">Lipoprotein signal peptidase</fullName>
        <ecNumber evidence="1">3.4.23.36</ecNumber>
    </recommendedName>
    <alternativeName>
        <fullName evidence="1">Prolipoprotein signal peptidase</fullName>
    </alternativeName>
    <alternativeName>
        <fullName evidence="1">Signal peptidase II</fullName>
        <shortName evidence="1">SPase II</shortName>
    </alternativeName>
</protein>
<comment type="function">
    <text evidence="1">This protein specifically catalyzes the removal of signal peptides from prolipoproteins.</text>
</comment>
<comment type="catalytic activity">
    <reaction evidence="1">
        <text>Release of signal peptides from bacterial membrane prolipoproteins. Hydrolyzes -Xaa-Yaa-Zaa-|-(S,diacylglyceryl)Cys-, in which Xaa is hydrophobic (preferably Leu), and Yaa (Ala or Ser) and Zaa (Gly or Ala) have small, neutral side chains.</text>
        <dbReference type="EC" id="3.4.23.36"/>
    </reaction>
</comment>
<comment type="pathway">
    <text evidence="1">Protein modification; lipoprotein biosynthesis (signal peptide cleavage).</text>
</comment>
<comment type="subcellular location">
    <subcellularLocation>
        <location evidence="1">Cell inner membrane</location>
        <topology evidence="1">Multi-pass membrane protein</topology>
    </subcellularLocation>
</comment>
<comment type="similarity">
    <text evidence="1">Belongs to the peptidase A8 family.</text>
</comment>
<name>LSPA_SULSY</name>
<feature type="chain" id="PRO_1000190806" description="Lipoprotein signal peptidase">
    <location>
        <begin position="1"/>
        <end position="163"/>
    </location>
</feature>
<feature type="transmembrane region" description="Helical" evidence="1">
    <location>
        <begin position="5"/>
        <end position="25"/>
    </location>
</feature>
<feature type="transmembrane region" description="Helical" evidence="1">
    <location>
        <begin position="37"/>
        <end position="57"/>
    </location>
</feature>
<feature type="transmembrane region" description="Helical" evidence="1">
    <location>
        <begin position="67"/>
        <end position="87"/>
    </location>
</feature>
<feature type="transmembrane region" description="Helical" evidence="1">
    <location>
        <begin position="91"/>
        <end position="111"/>
    </location>
</feature>
<feature type="transmembrane region" description="Helical" evidence="1">
    <location>
        <begin position="132"/>
        <end position="152"/>
    </location>
</feature>
<feature type="active site" evidence="1">
    <location>
        <position position="121"/>
    </location>
</feature>
<feature type="active site" evidence="1">
    <location>
        <position position="139"/>
    </location>
</feature>
<sequence length="163" mass="18047">MNKKVLTFLGISFVIIVLDLTTKSLAEKYLADKAIEIIPGLFNLVLVWNKGAAFGMLAEAPETIRKLMLVGSSIIAAVITAGYVFKSNAKLSNLEVLSLALICGGSVGNLYDRFMLGQVRDFLDFYINDHHWPAFNVADASITIGIALFIGYELFWKKRRITN</sequence>